<keyword id="KW-0025">Alternative splicing</keyword>
<keyword id="KW-0238">DNA-binding</keyword>
<keyword id="KW-1017">Isopeptide bond</keyword>
<keyword id="KW-0539">Nucleus</keyword>
<keyword id="KW-0597">Phosphoprotein</keyword>
<keyword id="KW-1267">Proteomics identification</keyword>
<keyword id="KW-1185">Reference proteome</keyword>
<keyword id="KW-0678">Repressor</keyword>
<keyword id="KW-0804">Transcription</keyword>
<keyword id="KW-0805">Transcription regulation</keyword>
<keyword id="KW-0832">Ubl conjugation</keyword>
<name>JDP2_HUMAN</name>
<comment type="function">
    <text evidence="4 5 6 7">Component of the AP-1 transcription factor that represses transactivation mediated by the Jun family of proteins. Involved in a variety of transcriptional responses associated with AP-1 such as UV-induced apoptosis, cell differentiation, tumorigenesis and antitumogeneris. Can also function as a repressor by recruiting histone deacetylase 3/HDAC3 to the promoter region of JUN. May control transcription via direct regulation of the modification of histones and the assembly of chromatin.</text>
</comment>
<comment type="subunit">
    <text evidence="1 9">Forms a homodimer or heterodimer with JUN, JUNB, JUND, CEBPG and ATF2 thereby inhibiting transactivation by JUN, ATF2 and CEBPG (By similarity). Binds multiple DNA elements such as cAMP-response element (CRE) and TPA response element (TRE) either as homodimer or heterodimer (By similarity). Interacts with IRF2BP1.</text>
</comment>
<comment type="interaction">
    <interactant intactId="EBI-1248415">
        <id>Q8WYK2</id>
    </interactant>
    <interactant intactId="EBI-492498">
        <id>P18848</id>
        <label>ATF4</label>
    </interactant>
    <organismsDiffer>false</organismsDiffer>
    <experiments>3</experiments>
</comment>
<comment type="interaction">
    <interactant intactId="EBI-1248415">
        <id>Q8WYK2</id>
    </interactant>
    <interactant intactId="EBI-10192698">
        <id>Q02930-3</id>
        <label>CREB5</label>
    </interactant>
    <organismsDiffer>false</organismsDiffer>
    <experiments>3</experiments>
</comment>
<comment type="interaction">
    <interactant intactId="EBI-1248415">
        <id>Q8WYK2</id>
    </interactant>
    <interactant intactId="EBI-742651">
        <id>P35638</id>
        <label>DDIT3</label>
    </interactant>
    <organismsDiffer>false</organismsDiffer>
    <experiments>3</experiments>
</comment>
<comment type="interaction">
    <interactant intactId="EBI-1248415">
        <id>Q8WYK2</id>
    </interactant>
    <interactant intactId="EBI-6115514">
        <id>Q8IU81</id>
        <label>IRF2BP1</label>
    </interactant>
    <organismsDiffer>false</organismsDiffer>
    <experiments>4</experiments>
</comment>
<comment type="interaction">
    <interactant intactId="EBI-1248415">
        <id>Q8WYK2</id>
    </interactant>
    <interactant intactId="EBI-748062">
        <id>P17275</id>
        <label>JUNB</label>
    </interactant>
    <organismsDiffer>false</organismsDiffer>
    <experiments>3</experiments>
</comment>
<comment type="subcellular location">
    <subcellularLocation>
        <location evidence="10">Nucleus</location>
    </subcellularLocation>
</comment>
<comment type="alternative products">
    <event type="alternative splicing"/>
    <isoform>
        <id>Q8WYK2-1</id>
        <name>1</name>
        <sequence type="displayed"/>
    </isoform>
    <isoform>
        <id>Q8WYK2-2</id>
        <name>2</name>
        <sequence type="described" ref="VSP_047128"/>
    </isoform>
</comment>
<comment type="PTM">
    <text evidence="8">Phosphorylation of Thr-148 by MAPK8 in response to different stress conditions such as, UV irradiation, oxidatives stress and anisomycin treatments.</text>
</comment>
<comment type="PTM">
    <text evidence="9">Polyubiquitinated; probably by IRF2BP1.</text>
</comment>
<comment type="similarity">
    <text evidence="10">Belongs to the bZIP family. ATF subfamily.</text>
</comment>
<organism>
    <name type="scientific">Homo sapiens</name>
    <name type="common">Human</name>
    <dbReference type="NCBI Taxonomy" id="9606"/>
    <lineage>
        <taxon>Eukaryota</taxon>
        <taxon>Metazoa</taxon>
        <taxon>Chordata</taxon>
        <taxon>Craniata</taxon>
        <taxon>Vertebrata</taxon>
        <taxon>Euteleostomi</taxon>
        <taxon>Mammalia</taxon>
        <taxon>Eutheria</taxon>
        <taxon>Euarchontoglires</taxon>
        <taxon>Primates</taxon>
        <taxon>Haplorrhini</taxon>
        <taxon>Catarrhini</taxon>
        <taxon>Hominidae</taxon>
        <taxon>Homo</taxon>
    </lineage>
</organism>
<sequence>MMPGQIPDPSVTTGSLPGLGPLTGLPSSALTVEELKYADIRNLGAMIAPLHFLEVKLGKRPQPVKSELDEEEERRKRRREKNKVAAARCRNKKKERTEFLQRESERLELMNAELKTQIEELKQERQQLILMLNRHRPTCIVRTDSVKTPESEGNPLLEQLEKK</sequence>
<evidence type="ECO:0000250" key="1"/>
<evidence type="ECO:0000255" key="2">
    <source>
        <dbReference type="PROSITE-ProRule" id="PRU00978"/>
    </source>
</evidence>
<evidence type="ECO:0000256" key="3">
    <source>
        <dbReference type="SAM" id="MobiDB-lite"/>
    </source>
</evidence>
<evidence type="ECO:0000269" key="4">
    <source>
    </source>
</evidence>
<evidence type="ECO:0000269" key="5">
    <source>
    </source>
</evidence>
<evidence type="ECO:0000269" key="6">
    <source>
    </source>
</evidence>
<evidence type="ECO:0000269" key="7">
    <source>
    </source>
</evidence>
<evidence type="ECO:0000269" key="8">
    <source>
    </source>
</evidence>
<evidence type="ECO:0000269" key="9">
    <source>
    </source>
</evidence>
<evidence type="ECO:0000305" key="10"/>
<evidence type="ECO:0007744" key="11">
    <source>
    </source>
</evidence>
<evidence type="ECO:0007744" key="12">
    <source>
    </source>
</evidence>
<evidence type="ECO:0007744" key="13">
    <source>
    </source>
</evidence>
<evidence type="ECO:0007744" key="14">
    <source>
    </source>
</evidence>
<proteinExistence type="evidence at protein level"/>
<protein>
    <recommendedName>
        <fullName>Jun dimerization protein 2</fullName>
    </recommendedName>
</protein>
<dbReference type="EMBL" id="AB077880">
    <property type="protein sequence ID" value="BAB83896.1"/>
    <property type="molecule type" value="mRNA"/>
</dbReference>
<dbReference type="EMBL" id="AF111167">
    <property type="protein sequence ID" value="AAC98313.1"/>
    <property type="molecule type" value="Genomic_DNA"/>
</dbReference>
<dbReference type="EMBL" id="AC009363">
    <property type="protein sequence ID" value="AAF21148.1"/>
    <property type="molecule type" value="Genomic_DNA"/>
</dbReference>
<dbReference type="EMBL" id="CH471061">
    <property type="protein sequence ID" value="EAW81231.1"/>
    <property type="molecule type" value="Genomic_DNA"/>
</dbReference>
<dbReference type="EMBL" id="BC051303">
    <property type="protein sequence ID" value="AAH51303.1"/>
    <property type="molecule type" value="mRNA"/>
</dbReference>
<dbReference type="CCDS" id="CCDS45139.1">
    <molecule id="Q8WYK2-2"/>
</dbReference>
<dbReference type="CCDS" id="CCDS9842.1">
    <molecule id="Q8WYK2-1"/>
</dbReference>
<dbReference type="RefSeq" id="NP_001128519.1">
    <molecule id="Q8WYK2-1"/>
    <property type="nucleotide sequence ID" value="NM_001135047.2"/>
</dbReference>
<dbReference type="RefSeq" id="NP_001128520.1">
    <molecule id="Q8WYK2-1"/>
    <property type="nucleotide sequence ID" value="NM_001135048.2"/>
</dbReference>
<dbReference type="RefSeq" id="NP_001128521.1">
    <molecule id="Q8WYK2-2"/>
    <property type="nucleotide sequence ID" value="NM_001135049.1"/>
</dbReference>
<dbReference type="RefSeq" id="NP_569736.1">
    <molecule id="Q8WYK2-1"/>
    <property type="nucleotide sequence ID" value="NM_130469.3"/>
</dbReference>
<dbReference type="RefSeq" id="XP_005267389.1">
    <molecule id="Q8WYK2-1"/>
    <property type="nucleotide sequence ID" value="XM_005267332.5"/>
</dbReference>
<dbReference type="RefSeq" id="XP_016876461.1">
    <property type="nucleotide sequence ID" value="XM_017020972.1"/>
</dbReference>
<dbReference type="RefSeq" id="XP_016876462.1">
    <molecule id="Q8WYK2-1"/>
    <property type="nucleotide sequence ID" value="XM_017020973.2"/>
</dbReference>
<dbReference type="RefSeq" id="XP_016876463.1">
    <property type="nucleotide sequence ID" value="XM_017020974.1"/>
</dbReference>
<dbReference type="RefSeq" id="XP_016876464.1">
    <property type="nucleotide sequence ID" value="XM_017020975.1"/>
</dbReference>
<dbReference type="RefSeq" id="XP_047286899.1">
    <molecule id="Q8WYK2-2"/>
    <property type="nucleotide sequence ID" value="XM_047430943.1"/>
</dbReference>
<dbReference type="RefSeq" id="XP_047286900.1">
    <molecule id="Q8WYK2-2"/>
    <property type="nucleotide sequence ID" value="XM_047430944.1"/>
</dbReference>
<dbReference type="RefSeq" id="XP_054231375.1">
    <molecule id="Q8WYK2-2"/>
    <property type="nucleotide sequence ID" value="XM_054375400.1"/>
</dbReference>
<dbReference type="RefSeq" id="XP_054231376.1">
    <molecule id="Q8WYK2-2"/>
    <property type="nucleotide sequence ID" value="XM_054375401.1"/>
</dbReference>
<dbReference type="RefSeq" id="XP_054231377.1">
    <molecule id="Q8WYK2-1"/>
    <property type="nucleotide sequence ID" value="XM_054375402.1"/>
</dbReference>
<dbReference type="SMR" id="Q8WYK2"/>
<dbReference type="BioGRID" id="125807">
    <property type="interactions" value="24"/>
</dbReference>
<dbReference type="ComplexPortal" id="CPX-6419">
    <property type="entry name" value="bZIP transcription factor complex, ATF2-JDP2"/>
</dbReference>
<dbReference type="FunCoup" id="Q8WYK2">
    <property type="interactions" value="1114"/>
</dbReference>
<dbReference type="IntAct" id="Q8WYK2">
    <property type="interactions" value="16"/>
</dbReference>
<dbReference type="MINT" id="Q8WYK2"/>
<dbReference type="STRING" id="9606.ENSP00000267569"/>
<dbReference type="DrugBank" id="DB00852">
    <property type="generic name" value="Pseudoephedrine"/>
</dbReference>
<dbReference type="iPTMnet" id="Q8WYK2"/>
<dbReference type="PhosphoSitePlus" id="Q8WYK2"/>
<dbReference type="BioMuta" id="JDP2"/>
<dbReference type="DMDM" id="74751626"/>
<dbReference type="jPOST" id="Q8WYK2"/>
<dbReference type="MassIVE" id="Q8WYK2"/>
<dbReference type="PaxDb" id="9606-ENSP00000267569"/>
<dbReference type="PeptideAtlas" id="Q8WYK2"/>
<dbReference type="ProteomicsDB" id="75164">
    <molecule id="Q8WYK2-1"/>
</dbReference>
<dbReference type="Antibodypedia" id="25829">
    <property type="antibodies" value="126 antibodies from 23 providers"/>
</dbReference>
<dbReference type="DNASU" id="122953"/>
<dbReference type="Ensembl" id="ENST00000267569.5">
    <molecule id="Q8WYK2-2"/>
    <property type="protein sequence ID" value="ENSP00000267569.5"/>
    <property type="gene ID" value="ENSG00000140044.13"/>
</dbReference>
<dbReference type="Ensembl" id="ENST00000419727.6">
    <molecule id="Q8WYK2-1"/>
    <property type="protein sequence ID" value="ENSP00000415558.2"/>
    <property type="gene ID" value="ENSG00000140044.13"/>
</dbReference>
<dbReference type="Ensembl" id="ENST00000435893.6">
    <molecule id="Q8WYK2-1"/>
    <property type="protein sequence ID" value="ENSP00000399587.2"/>
    <property type="gene ID" value="ENSG00000140044.13"/>
</dbReference>
<dbReference type="Ensembl" id="ENST00000437176.5">
    <molecule id="Q8WYK2-1"/>
    <property type="protein sequence ID" value="ENSP00000409787.1"/>
    <property type="gene ID" value="ENSG00000140044.13"/>
</dbReference>
<dbReference type="Ensembl" id="ENST00000651602.1">
    <molecule id="Q8WYK2-1"/>
    <property type="protein sequence ID" value="ENSP00000498745.1"/>
    <property type="gene ID" value="ENSG00000140044.13"/>
</dbReference>
<dbReference type="GeneID" id="122953"/>
<dbReference type="KEGG" id="hsa:122953"/>
<dbReference type="MANE-Select" id="ENST00000651602.1">
    <property type="protein sequence ID" value="ENSP00000498745.1"/>
    <property type="RefSeq nucleotide sequence ID" value="NM_001135048.2"/>
    <property type="RefSeq protein sequence ID" value="NP_001128520.1"/>
</dbReference>
<dbReference type="UCSC" id="uc001xrq.4">
    <molecule id="Q8WYK2-1"/>
    <property type="organism name" value="human"/>
</dbReference>
<dbReference type="AGR" id="HGNC:17546"/>
<dbReference type="CTD" id="122953"/>
<dbReference type="DisGeNET" id="122953"/>
<dbReference type="GeneCards" id="JDP2"/>
<dbReference type="HGNC" id="HGNC:17546">
    <property type="gene designation" value="JDP2"/>
</dbReference>
<dbReference type="HPA" id="ENSG00000140044">
    <property type="expression patterns" value="Low tissue specificity"/>
</dbReference>
<dbReference type="MIM" id="608657">
    <property type="type" value="gene"/>
</dbReference>
<dbReference type="neXtProt" id="NX_Q8WYK2"/>
<dbReference type="OpenTargets" id="ENSG00000140044"/>
<dbReference type="PharmGKB" id="PA162392499"/>
<dbReference type="VEuPathDB" id="HostDB:ENSG00000140044"/>
<dbReference type="eggNOG" id="KOG1414">
    <property type="taxonomic scope" value="Eukaryota"/>
</dbReference>
<dbReference type="GeneTree" id="ENSGT00940000155693"/>
<dbReference type="HOGENOM" id="CLU_088612_0_1_1"/>
<dbReference type="InParanoid" id="Q8WYK2"/>
<dbReference type="OMA" id="FKVGLMQ"/>
<dbReference type="OrthoDB" id="2596881at2759"/>
<dbReference type="PAN-GO" id="Q8WYK2">
    <property type="GO annotations" value="4 GO annotations based on evolutionary models"/>
</dbReference>
<dbReference type="PhylomeDB" id="Q8WYK2"/>
<dbReference type="TreeFam" id="TF326301"/>
<dbReference type="PathwayCommons" id="Q8WYK2"/>
<dbReference type="SignaLink" id="Q8WYK2"/>
<dbReference type="SIGNOR" id="Q8WYK2"/>
<dbReference type="BioGRID-ORCS" id="122953">
    <property type="hits" value="20 hits in 1185 CRISPR screens"/>
</dbReference>
<dbReference type="ChiTaRS" id="JDP2">
    <property type="organism name" value="human"/>
</dbReference>
<dbReference type="GeneWiki" id="JDP2_(gene)"/>
<dbReference type="GeneWiki" id="Jun_dimerization_protein"/>
<dbReference type="GenomeRNAi" id="122953"/>
<dbReference type="Pharos" id="Q8WYK2">
    <property type="development level" value="Tbio"/>
</dbReference>
<dbReference type="PRO" id="PR:Q8WYK2"/>
<dbReference type="Proteomes" id="UP000005640">
    <property type="component" value="Chromosome 14"/>
</dbReference>
<dbReference type="RNAct" id="Q8WYK2">
    <property type="molecule type" value="protein"/>
</dbReference>
<dbReference type="Bgee" id="ENSG00000140044">
    <property type="expression patterns" value="Expressed in synovial joint and 174 other cell types or tissues"/>
</dbReference>
<dbReference type="ExpressionAtlas" id="Q8WYK2">
    <property type="expression patterns" value="baseline and differential"/>
</dbReference>
<dbReference type="GO" id="GO:0000785">
    <property type="term" value="C:chromatin"/>
    <property type="evidence" value="ECO:0000247"/>
    <property type="project" value="NTNU_SB"/>
</dbReference>
<dbReference type="GO" id="GO:0005634">
    <property type="term" value="C:nucleus"/>
    <property type="evidence" value="ECO:0000269"/>
    <property type="project" value="ComplexPortal"/>
</dbReference>
<dbReference type="GO" id="GO:0090575">
    <property type="term" value="C:RNA polymerase II transcription regulator complex"/>
    <property type="evidence" value="ECO:0000269"/>
    <property type="project" value="ComplexPortal"/>
</dbReference>
<dbReference type="GO" id="GO:0035497">
    <property type="term" value="F:cAMP response element binding"/>
    <property type="evidence" value="ECO:0007669"/>
    <property type="project" value="Ensembl"/>
</dbReference>
<dbReference type="GO" id="GO:0003682">
    <property type="term" value="F:chromatin binding"/>
    <property type="evidence" value="ECO:0007669"/>
    <property type="project" value="Ensembl"/>
</dbReference>
<dbReference type="GO" id="GO:0000981">
    <property type="term" value="F:DNA-binding transcription factor activity, RNA polymerase II-specific"/>
    <property type="evidence" value="ECO:0000247"/>
    <property type="project" value="NTNU_SB"/>
</dbReference>
<dbReference type="GO" id="GO:0001227">
    <property type="term" value="F:DNA-binding transcription repressor activity, RNA polymerase II-specific"/>
    <property type="evidence" value="ECO:0000314"/>
    <property type="project" value="ARUK-UCL"/>
</dbReference>
<dbReference type="GO" id="GO:0140713">
    <property type="term" value="F:histone chaperone activity"/>
    <property type="evidence" value="ECO:0007669"/>
    <property type="project" value="Ensembl"/>
</dbReference>
<dbReference type="GO" id="GO:0042826">
    <property type="term" value="F:histone deacetylase binding"/>
    <property type="evidence" value="ECO:0007669"/>
    <property type="project" value="Ensembl"/>
</dbReference>
<dbReference type="GO" id="GO:0043522">
    <property type="term" value="F:leucine zipper domain binding"/>
    <property type="evidence" value="ECO:0007669"/>
    <property type="project" value="Ensembl"/>
</dbReference>
<dbReference type="GO" id="GO:0046982">
    <property type="term" value="F:protein heterodimerization activity"/>
    <property type="evidence" value="ECO:0007669"/>
    <property type="project" value="Ensembl"/>
</dbReference>
<dbReference type="GO" id="GO:0042803">
    <property type="term" value="F:protein homodimerization activity"/>
    <property type="evidence" value="ECO:0007669"/>
    <property type="project" value="Ensembl"/>
</dbReference>
<dbReference type="GO" id="GO:0000978">
    <property type="term" value="F:RNA polymerase II cis-regulatory region sequence-specific DNA binding"/>
    <property type="evidence" value="ECO:0000318"/>
    <property type="project" value="GO_Central"/>
</dbReference>
<dbReference type="GO" id="GO:1990837">
    <property type="term" value="F:sequence-specific double-stranded DNA binding"/>
    <property type="evidence" value="ECO:0000314"/>
    <property type="project" value="ARUK-UCL"/>
</dbReference>
<dbReference type="GO" id="GO:0006338">
    <property type="term" value="P:chromatin remodeling"/>
    <property type="evidence" value="ECO:0007669"/>
    <property type="project" value="Ensembl"/>
</dbReference>
<dbReference type="GO" id="GO:0045444">
    <property type="term" value="P:fat cell differentiation"/>
    <property type="evidence" value="ECO:0007669"/>
    <property type="project" value="Ensembl"/>
</dbReference>
<dbReference type="GO" id="GO:0045599">
    <property type="term" value="P:negative regulation of fat cell differentiation"/>
    <property type="evidence" value="ECO:0007669"/>
    <property type="project" value="Ensembl"/>
</dbReference>
<dbReference type="GO" id="GO:0000122">
    <property type="term" value="P:negative regulation of transcription by RNA polymerase II"/>
    <property type="evidence" value="ECO:0000314"/>
    <property type="project" value="ARUK-UCL"/>
</dbReference>
<dbReference type="GO" id="GO:0006357">
    <property type="term" value="P:regulation of transcription by RNA polymerase II"/>
    <property type="evidence" value="ECO:0000318"/>
    <property type="project" value="GO_Central"/>
</dbReference>
<dbReference type="FunFam" id="1.20.5.170:FF:000006">
    <property type="entry name" value="fos-related antigen 2 isoform X1"/>
    <property type="match status" value="1"/>
</dbReference>
<dbReference type="Gene3D" id="1.20.5.170">
    <property type="match status" value="1"/>
</dbReference>
<dbReference type="InterPro" id="IPR000837">
    <property type="entry name" value="AP-1"/>
</dbReference>
<dbReference type="InterPro" id="IPR004827">
    <property type="entry name" value="bZIP"/>
</dbReference>
<dbReference type="InterPro" id="IPR046347">
    <property type="entry name" value="bZIP_sf"/>
</dbReference>
<dbReference type="PANTHER" id="PTHR23351">
    <property type="entry name" value="FOS TRANSCRIPTION FACTOR-RELATED"/>
    <property type="match status" value="1"/>
</dbReference>
<dbReference type="PANTHER" id="PTHR23351:SF10">
    <property type="entry name" value="JUN DIMERIZATION PROTEIN 2"/>
    <property type="match status" value="1"/>
</dbReference>
<dbReference type="Pfam" id="PF00170">
    <property type="entry name" value="bZIP_1"/>
    <property type="match status" value="1"/>
</dbReference>
<dbReference type="PRINTS" id="PR00042">
    <property type="entry name" value="LEUZIPPRFOS"/>
</dbReference>
<dbReference type="SMART" id="SM00338">
    <property type="entry name" value="BRLZ"/>
    <property type="match status" value="1"/>
</dbReference>
<dbReference type="SUPFAM" id="SSF57959">
    <property type="entry name" value="Leucine zipper domain"/>
    <property type="match status" value="1"/>
</dbReference>
<dbReference type="PROSITE" id="PS50217">
    <property type="entry name" value="BZIP"/>
    <property type="match status" value="1"/>
</dbReference>
<dbReference type="PROSITE" id="PS00036">
    <property type="entry name" value="BZIP_BASIC"/>
    <property type="match status" value="1"/>
</dbReference>
<gene>
    <name type="primary">JDP2</name>
</gene>
<feature type="chain" id="PRO_0000331130" description="Jun dimerization protein 2">
    <location>
        <begin position="1"/>
        <end position="163"/>
    </location>
</feature>
<feature type="domain" description="bZIP" evidence="2">
    <location>
        <begin position="72"/>
        <end position="135"/>
    </location>
</feature>
<feature type="region of interest" description="Disordered" evidence="3">
    <location>
        <begin position="1"/>
        <end position="20"/>
    </location>
</feature>
<feature type="region of interest" description="Disordered" evidence="3">
    <location>
        <begin position="58"/>
        <end position="89"/>
    </location>
</feature>
<feature type="region of interest" description="Basic motif" evidence="2">
    <location>
        <begin position="74"/>
        <end position="96"/>
    </location>
</feature>
<feature type="region of interest" description="Leucine-zipper" evidence="2">
    <location>
        <begin position="100"/>
        <end position="128"/>
    </location>
</feature>
<feature type="modified residue" description="Phosphothreonine; by MAPK8" evidence="8 11">
    <location>
        <position position="148"/>
    </location>
</feature>
<feature type="cross-link" description="Glycyl lysine isopeptide (Lys-Gly) (interchain with G-Cter in SUMO2)" evidence="12 13 14">
    <location>
        <position position="65"/>
    </location>
</feature>
<feature type="splice variant" id="VSP_047128" description="In isoform 2." evidence="10">
    <original>M</original>
    <variation>MVAGWPATPPAM</variation>
    <location>
        <position position="1"/>
    </location>
</feature>
<feature type="sequence variant" id="VAR_042738" description="In dbSNP:rs3625.">
    <original>T</original>
    <variation>A</variation>
    <location>
        <position position="13"/>
    </location>
</feature>
<reference key="1">
    <citation type="journal article" date="2003" name="J. Exp. Med.">
        <title>Jun dimerization protein 2 (JDP2), a member of the AP-1 family of transcription factor, mediates osteoclast differentiation induced by RANKL.</title>
        <authorList>
            <person name="Kawaida R."/>
            <person name="Ohtsuka T."/>
            <person name="Okutsu J."/>
            <person name="Takahashi T."/>
            <person name="Kadono Y."/>
            <person name="Oda H."/>
            <person name="Hikita A."/>
            <person name="Nakamura K."/>
            <person name="Tanaka S."/>
            <person name="Furukawa H."/>
        </authorList>
    </citation>
    <scope>NUCLEOTIDE SEQUENCE [MRNA]</scope>
    <scope>FUNCTION</scope>
</reference>
<reference key="2">
    <citation type="journal article" date="2003" name="Nature">
        <title>The DNA sequence and analysis of human chromosome 14.</title>
        <authorList>
            <person name="Heilig R."/>
            <person name="Eckenberg R."/>
            <person name="Petit J.-L."/>
            <person name="Fonknechten N."/>
            <person name="Da Silva C."/>
            <person name="Cattolico L."/>
            <person name="Levy M."/>
            <person name="Barbe V."/>
            <person name="De Berardinis V."/>
            <person name="Ureta-Vidal A."/>
            <person name="Pelletier E."/>
            <person name="Vico V."/>
            <person name="Anthouard V."/>
            <person name="Rowen L."/>
            <person name="Madan A."/>
            <person name="Qin S."/>
            <person name="Sun H."/>
            <person name="Du H."/>
            <person name="Pepin K."/>
            <person name="Artiguenave F."/>
            <person name="Robert C."/>
            <person name="Cruaud C."/>
            <person name="Bruels T."/>
            <person name="Jaillon O."/>
            <person name="Friedlander L."/>
            <person name="Samson G."/>
            <person name="Brottier P."/>
            <person name="Cure S."/>
            <person name="Segurens B."/>
            <person name="Aniere F."/>
            <person name="Samain S."/>
            <person name="Crespeau H."/>
            <person name="Abbasi N."/>
            <person name="Aiach N."/>
            <person name="Boscus D."/>
            <person name="Dickhoff R."/>
            <person name="Dors M."/>
            <person name="Dubois I."/>
            <person name="Friedman C."/>
            <person name="Gouyvenoux M."/>
            <person name="James R."/>
            <person name="Madan A."/>
            <person name="Mairey-Estrada B."/>
            <person name="Mangenot S."/>
            <person name="Martins N."/>
            <person name="Menard M."/>
            <person name="Oztas S."/>
            <person name="Ratcliffe A."/>
            <person name="Shaffer T."/>
            <person name="Trask B."/>
            <person name="Vacherie B."/>
            <person name="Bellemere C."/>
            <person name="Belser C."/>
            <person name="Besnard-Gonnet M."/>
            <person name="Bartol-Mavel D."/>
            <person name="Boutard M."/>
            <person name="Briez-Silla S."/>
            <person name="Combette S."/>
            <person name="Dufosse-Laurent V."/>
            <person name="Ferron C."/>
            <person name="Lechaplais C."/>
            <person name="Louesse C."/>
            <person name="Muselet D."/>
            <person name="Magdelenat G."/>
            <person name="Pateau E."/>
            <person name="Petit E."/>
            <person name="Sirvain-Trukniewicz P."/>
            <person name="Trybou A."/>
            <person name="Vega-Czarny N."/>
            <person name="Bataille E."/>
            <person name="Bluet E."/>
            <person name="Bordelais I."/>
            <person name="Dubois M."/>
            <person name="Dumont C."/>
            <person name="Guerin T."/>
            <person name="Haffray S."/>
            <person name="Hammadi R."/>
            <person name="Muanga J."/>
            <person name="Pellouin V."/>
            <person name="Robert D."/>
            <person name="Wunderle E."/>
            <person name="Gauguet G."/>
            <person name="Roy A."/>
            <person name="Sainte-Marthe L."/>
            <person name="Verdier J."/>
            <person name="Verdier-Discala C."/>
            <person name="Hillier L.W."/>
            <person name="Fulton L."/>
            <person name="McPherson J."/>
            <person name="Matsuda F."/>
            <person name="Wilson R."/>
            <person name="Scarpelli C."/>
            <person name="Gyapay G."/>
            <person name="Wincker P."/>
            <person name="Saurin W."/>
            <person name="Quetier F."/>
            <person name="Waterston R."/>
            <person name="Hood L."/>
            <person name="Weissenbach J."/>
        </authorList>
    </citation>
    <scope>NUCLEOTIDE SEQUENCE [LARGE SCALE GENOMIC DNA]</scope>
</reference>
<reference key="3">
    <citation type="submission" date="2005-07" db="EMBL/GenBank/DDBJ databases">
        <authorList>
            <person name="Mural R.J."/>
            <person name="Istrail S."/>
            <person name="Sutton G.G."/>
            <person name="Florea L."/>
            <person name="Halpern A.L."/>
            <person name="Mobarry C.M."/>
            <person name="Lippert R."/>
            <person name="Walenz B."/>
            <person name="Shatkay H."/>
            <person name="Dew I."/>
            <person name="Miller J.R."/>
            <person name="Flanigan M.J."/>
            <person name="Edwards N.J."/>
            <person name="Bolanos R."/>
            <person name="Fasulo D."/>
            <person name="Halldorsson B.V."/>
            <person name="Hannenhalli S."/>
            <person name="Turner R."/>
            <person name="Yooseph S."/>
            <person name="Lu F."/>
            <person name="Nusskern D.R."/>
            <person name="Shue B.C."/>
            <person name="Zheng X.H."/>
            <person name="Zhong F."/>
            <person name="Delcher A.L."/>
            <person name="Huson D.H."/>
            <person name="Kravitz S.A."/>
            <person name="Mouchard L."/>
            <person name="Reinert K."/>
            <person name="Remington K.A."/>
            <person name="Clark A.G."/>
            <person name="Waterman M.S."/>
            <person name="Eichler E.E."/>
            <person name="Adams M.D."/>
            <person name="Hunkapiller M.W."/>
            <person name="Myers E.W."/>
            <person name="Venter J.C."/>
        </authorList>
    </citation>
    <scope>NUCLEOTIDE SEQUENCE [LARGE SCALE GENOMIC DNA]</scope>
</reference>
<reference key="4">
    <citation type="journal article" date="2004" name="Genome Res.">
        <title>The status, quality, and expansion of the NIH full-length cDNA project: the Mammalian Gene Collection (MGC).</title>
        <authorList>
            <consortium name="The MGC Project Team"/>
        </authorList>
    </citation>
    <scope>NUCLEOTIDE SEQUENCE [LARGE SCALE MRNA]</scope>
    <source>
        <tissue>Colon</tissue>
    </source>
</reference>
<reference key="5">
    <citation type="journal article" date="2002" name="Nucleic Acids Res. Suppl.">
        <title>Transcriptional regulation of the c-jun gene by AP-1 repressor protein JDP2 during the differentiation of F9 cells.</title>
        <authorList>
            <person name="Jin C."/>
            <person name="Li H."/>
            <person name="Ugai H."/>
            <person name="Murata T."/>
            <person name="Yokoyama K.K."/>
        </authorList>
    </citation>
    <scope>FUNCTION</scope>
</reference>
<reference key="6">
    <citation type="journal article" date="2006" name="Nat. Struct. Mol. Biol.">
        <title>Regulation of histone acetylation and nucleosome assembly by transcription factor JDP2.</title>
        <authorList>
            <person name="Jin C."/>
            <person name="Kato K."/>
            <person name="Chimura T."/>
            <person name="Yamasaki T."/>
            <person name="Nakade K."/>
            <person name="Murata T."/>
            <person name="Li H."/>
            <person name="Pan J."/>
            <person name="Zhao M."/>
            <person name="Sun K."/>
            <person name="Chiu R."/>
            <person name="Ito T."/>
            <person name="Nagata K."/>
            <person name="Horikoshi M."/>
            <person name="Yokoyama K.K."/>
        </authorList>
    </citation>
    <scope>FUNCTION</scope>
</reference>
<reference key="7">
    <citation type="journal article" date="2005" name="Biochim. Biophys. Acta">
        <title>Depletion of the AP-1 repressor JDP2 induces cell death similar to apoptosis.</title>
        <authorList>
            <person name="Lerdrup M."/>
            <person name="Holmberg C."/>
            <person name="Dietrich N."/>
            <person name="Shaulian E."/>
            <person name="Herdegen T."/>
            <person name="Jaeaettelae M."/>
            <person name="Kallunki T."/>
        </authorList>
    </citation>
    <scope>FUNCTION</scope>
</reference>
<reference key="8">
    <citation type="journal article" date="2008" name="Anal. Biochem.">
        <title>Phosphorylation of two eukaryotic transcription factors, Jun dimerization protein 2 and activation transcription factor 2, in Escherichia coli by Jun N-terminal kinase 1.</title>
        <authorList>
            <person name="Murata T."/>
            <person name="Shinozuka Y."/>
            <person name="Obata Y."/>
            <person name="Yokoyama K.K."/>
        </authorList>
    </citation>
    <scope>PHOSPHORYLATION AT THR-148 BY MAPK8</scope>
    <scope>IDENTIFICATION BY MASS SPECTROMETRY</scope>
</reference>
<reference key="9">
    <citation type="journal article" date="2008" name="FEBS Lett.">
        <title>IRF2-binding protein-1 is a JDP2 ubiquitin ligase and an inhibitor of ATF2-dependent transcription.</title>
        <authorList>
            <person name="Kimura M."/>
        </authorList>
    </citation>
    <scope>UBIQUITINATION</scope>
    <scope>INTERACTION WITH IRF2BP1</scope>
</reference>
<reference key="10">
    <citation type="journal article" date="2013" name="J. Proteome Res.">
        <title>Toward a comprehensive characterization of a human cancer cell phosphoproteome.</title>
        <authorList>
            <person name="Zhou H."/>
            <person name="Di Palma S."/>
            <person name="Preisinger C."/>
            <person name="Peng M."/>
            <person name="Polat A.N."/>
            <person name="Heck A.J."/>
            <person name="Mohammed S."/>
        </authorList>
    </citation>
    <scope>PHOSPHORYLATION [LARGE SCALE ANALYSIS] AT THR-148</scope>
    <scope>IDENTIFICATION BY MASS SPECTROMETRY [LARGE SCALE ANALYSIS]</scope>
    <source>
        <tissue>Cervix carcinoma</tissue>
        <tissue>Erythroleukemia</tissue>
    </source>
</reference>
<reference key="11">
    <citation type="journal article" date="2014" name="Nat. Struct. Mol. Biol.">
        <title>Uncovering global SUMOylation signaling networks in a site-specific manner.</title>
        <authorList>
            <person name="Hendriks I.A."/>
            <person name="D'Souza R.C."/>
            <person name="Yang B."/>
            <person name="Verlaan-de Vries M."/>
            <person name="Mann M."/>
            <person name="Vertegaal A.C."/>
        </authorList>
    </citation>
    <scope>SUMOYLATION [LARGE SCALE ANALYSIS] AT LYS-65</scope>
    <scope>IDENTIFICATION BY MASS SPECTROMETRY [LARGE SCALE ANALYSIS]</scope>
</reference>
<reference key="12">
    <citation type="journal article" date="2015" name="Mol. Cell. Proteomics">
        <title>System-wide analysis of SUMOylation dynamics in response to replication stress reveals novel small ubiquitin-like modified target proteins and acceptor lysines relevant for genome stability.</title>
        <authorList>
            <person name="Xiao Z."/>
            <person name="Chang J.G."/>
            <person name="Hendriks I.A."/>
            <person name="Sigurdsson J.O."/>
            <person name="Olsen J.V."/>
            <person name="Vertegaal A.C."/>
        </authorList>
    </citation>
    <scope>SUMOYLATION [LARGE SCALE ANALYSIS] AT LYS-65</scope>
    <scope>IDENTIFICATION BY MASS SPECTROMETRY [LARGE SCALE ANALYSIS]</scope>
</reference>
<reference key="13">
    <citation type="journal article" date="2017" name="Nat. Struct. Mol. Biol.">
        <title>Site-specific mapping of the human SUMO proteome reveals co-modification with phosphorylation.</title>
        <authorList>
            <person name="Hendriks I.A."/>
            <person name="Lyon D."/>
            <person name="Young C."/>
            <person name="Jensen L.J."/>
            <person name="Vertegaal A.C."/>
            <person name="Nielsen M.L."/>
        </authorList>
    </citation>
    <scope>SUMOYLATION [LARGE SCALE ANALYSIS] AT LYS-65</scope>
    <scope>IDENTIFICATION BY MASS SPECTROMETRY [LARGE SCALE ANALYSIS]</scope>
</reference>
<accession>Q8WYK2</accession>
<accession>J3KN58</accession>
<accession>O95430</accession>
<accession>Q9UIE4</accession>